<gene>
    <name evidence="1" type="primary">atpG</name>
    <name type="ordered locus">EcE24377A_4249</name>
</gene>
<keyword id="KW-0066">ATP synthesis</keyword>
<keyword id="KW-0997">Cell inner membrane</keyword>
<keyword id="KW-1003">Cell membrane</keyword>
<keyword id="KW-0139">CF(1)</keyword>
<keyword id="KW-0375">Hydrogen ion transport</keyword>
<keyword id="KW-0406">Ion transport</keyword>
<keyword id="KW-0472">Membrane</keyword>
<keyword id="KW-1185">Reference proteome</keyword>
<keyword id="KW-0813">Transport</keyword>
<feature type="chain" id="PRO_1000062290" description="ATP synthase gamma chain">
    <location>
        <begin position="1"/>
        <end position="287"/>
    </location>
</feature>
<organism>
    <name type="scientific">Escherichia coli O139:H28 (strain E24377A / ETEC)</name>
    <dbReference type="NCBI Taxonomy" id="331111"/>
    <lineage>
        <taxon>Bacteria</taxon>
        <taxon>Pseudomonadati</taxon>
        <taxon>Pseudomonadota</taxon>
        <taxon>Gammaproteobacteria</taxon>
        <taxon>Enterobacterales</taxon>
        <taxon>Enterobacteriaceae</taxon>
        <taxon>Escherichia</taxon>
    </lineage>
</organism>
<name>ATPG_ECO24</name>
<comment type="function">
    <text evidence="1">Produces ATP from ADP in the presence of a proton gradient across the membrane. The gamma chain is believed to be important in regulating ATPase activity and the flow of protons through the CF(0) complex.</text>
</comment>
<comment type="subunit">
    <text evidence="1">F-type ATPases have 2 components, CF(1) - the catalytic core - and CF(0) - the membrane proton channel. CF(1) has five subunits: alpha(3), beta(3), gamma(1), delta(1), epsilon(1). CF(0) has three main subunits: a, b and c.</text>
</comment>
<comment type="subcellular location">
    <subcellularLocation>
        <location evidence="1">Cell inner membrane</location>
        <topology evidence="1">Peripheral membrane protein</topology>
    </subcellularLocation>
</comment>
<comment type="similarity">
    <text evidence="1">Belongs to the ATPase gamma chain family.</text>
</comment>
<accession>A7ZTU5</accession>
<sequence>MAGAKEIRSKIASVQNTQKITKAMEMVAASKMRKSQDRMAASRPYAETMRKVIGHLAHGNLEYKHPYLEERDVKRVGYLVVSTDRGLCGGLNINLFKKLLAEMKTWTDKGVQCDLAMIGSKGVSFFNSVGGNVVAQVTGMGDNPSLSELIGPVKVMLQAYDEGRLDKLYIVSNKFINTMSQVPTISQLLPLPASDDDDLKHKSWDYLYEPDPKALLDTLLRRYVESQVYQGVVENLASEQAARMVAMKAATDNGGSLIKELQLVYNKARQASITQELTEIVSGAAAV</sequence>
<dbReference type="EMBL" id="CP000800">
    <property type="protein sequence ID" value="ABV17455.1"/>
    <property type="molecule type" value="Genomic_DNA"/>
</dbReference>
<dbReference type="RefSeq" id="WP_000896501.1">
    <property type="nucleotide sequence ID" value="NC_009801.1"/>
</dbReference>
<dbReference type="SMR" id="A7ZTU5"/>
<dbReference type="GeneID" id="89518626"/>
<dbReference type="KEGG" id="ecw:EcE24377A_4249"/>
<dbReference type="HOGENOM" id="CLU_050669_0_1_6"/>
<dbReference type="Proteomes" id="UP000001122">
    <property type="component" value="Chromosome"/>
</dbReference>
<dbReference type="GO" id="GO:0005886">
    <property type="term" value="C:plasma membrane"/>
    <property type="evidence" value="ECO:0007669"/>
    <property type="project" value="UniProtKB-SubCell"/>
</dbReference>
<dbReference type="GO" id="GO:0045259">
    <property type="term" value="C:proton-transporting ATP synthase complex"/>
    <property type="evidence" value="ECO:0007669"/>
    <property type="project" value="UniProtKB-KW"/>
</dbReference>
<dbReference type="GO" id="GO:0005524">
    <property type="term" value="F:ATP binding"/>
    <property type="evidence" value="ECO:0007669"/>
    <property type="project" value="UniProtKB-UniRule"/>
</dbReference>
<dbReference type="GO" id="GO:0046933">
    <property type="term" value="F:proton-transporting ATP synthase activity, rotational mechanism"/>
    <property type="evidence" value="ECO:0007669"/>
    <property type="project" value="UniProtKB-UniRule"/>
</dbReference>
<dbReference type="GO" id="GO:0042777">
    <property type="term" value="P:proton motive force-driven plasma membrane ATP synthesis"/>
    <property type="evidence" value="ECO:0007669"/>
    <property type="project" value="UniProtKB-UniRule"/>
</dbReference>
<dbReference type="CDD" id="cd12151">
    <property type="entry name" value="F1-ATPase_gamma"/>
    <property type="match status" value="1"/>
</dbReference>
<dbReference type="FunFam" id="1.10.287.80:FF:000005">
    <property type="entry name" value="ATP synthase gamma chain"/>
    <property type="match status" value="2"/>
</dbReference>
<dbReference type="FunFam" id="3.40.1380.10:FF:000001">
    <property type="entry name" value="ATP synthase gamma chain"/>
    <property type="match status" value="1"/>
</dbReference>
<dbReference type="Gene3D" id="3.40.1380.10">
    <property type="match status" value="1"/>
</dbReference>
<dbReference type="Gene3D" id="1.10.287.80">
    <property type="entry name" value="ATP synthase, gamma subunit, helix hairpin domain"/>
    <property type="match status" value="1"/>
</dbReference>
<dbReference type="HAMAP" id="MF_00815">
    <property type="entry name" value="ATP_synth_gamma_bact"/>
    <property type="match status" value="1"/>
</dbReference>
<dbReference type="InterPro" id="IPR035968">
    <property type="entry name" value="ATP_synth_F1_ATPase_gsu"/>
</dbReference>
<dbReference type="InterPro" id="IPR000131">
    <property type="entry name" value="ATP_synth_F1_gsu"/>
</dbReference>
<dbReference type="InterPro" id="IPR023632">
    <property type="entry name" value="ATP_synth_F1_gsu_CS"/>
</dbReference>
<dbReference type="NCBIfam" id="TIGR01146">
    <property type="entry name" value="ATPsyn_F1gamma"/>
    <property type="match status" value="1"/>
</dbReference>
<dbReference type="NCBIfam" id="NF004144">
    <property type="entry name" value="PRK05621.1-1"/>
    <property type="match status" value="1"/>
</dbReference>
<dbReference type="PANTHER" id="PTHR11693">
    <property type="entry name" value="ATP SYNTHASE GAMMA CHAIN"/>
    <property type="match status" value="1"/>
</dbReference>
<dbReference type="PANTHER" id="PTHR11693:SF22">
    <property type="entry name" value="ATP SYNTHASE SUBUNIT GAMMA, MITOCHONDRIAL"/>
    <property type="match status" value="1"/>
</dbReference>
<dbReference type="Pfam" id="PF00231">
    <property type="entry name" value="ATP-synt"/>
    <property type="match status" value="1"/>
</dbReference>
<dbReference type="PRINTS" id="PR00126">
    <property type="entry name" value="ATPASEGAMMA"/>
</dbReference>
<dbReference type="SUPFAM" id="SSF52943">
    <property type="entry name" value="ATP synthase (F1-ATPase), gamma subunit"/>
    <property type="match status" value="1"/>
</dbReference>
<dbReference type="PROSITE" id="PS00153">
    <property type="entry name" value="ATPASE_GAMMA"/>
    <property type="match status" value="1"/>
</dbReference>
<evidence type="ECO:0000255" key="1">
    <source>
        <dbReference type="HAMAP-Rule" id="MF_00815"/>
    </source>
</evidence>
<proteinExistence type="inferred from homology"/>
<protein>
    <recommendedName>
        <fullName evidence="1">ATP synthase gamma chain</fullName>
    </recommendedName>
    <alternativeName>
        <fullName evidence="1">ATP synthase F1 sector gamma subunit</fullName>
    </alternativeName>
    <alternativeName>
        <fullName evidence="1">F-ATPase gamma subunit</fullName>
    </alternativeName>
</protein>
<reference key="1">
    <citation type="journal article" date="2008" name="J. Bacteriol.">
        <title>The pangenome structure of Escherichia coli: comparative genomic analysis of E. coli commensal and pathogenic isolates.</title>
        <authorList>
            <person name="Rasko D.A."/>
            <person name="Rosovitz M.J."/>
            <person name="Myers G.S.A."/>
            <person name="Mongodin E.F."/>
            <person name="Fricke W.F."/>
            <person name="Gajer P."/>
            <person name="Crabtree J."/>
            <person name="Sebaihia M."/>
            <person name="Thomson N.R."/>
            <person name="Chaudhuri R."/>
            <person name="Henderson I.R."/>
            <person name="Sperandio V."/>
            <person name="Ravel J."/>
        </authorList>
    </citation>
    <scope>NUCLEOTIDE SEQUENCE [LARGE SCALE GENOMIC DNA]</scope>
    <source>
        <strain>E24377A / ETEC</strain>
    </source>
</reference>